<keyword id="KW-0002">3D-structure</keyword>
<keyword id="KW-0903">Direct protein sequencing</keyword>
<keyword id="KW-0481">Metalloenzyme inhibitor</keyword>
<keyword id="KW-0483">Metalloprotease inhibitor</keyword>
<keyword id="KW-0646">Protease inhibitor</keyword>
<keyword id="KW-0964">Secreted</keyword>
<accession>P19399</accession>
<organism>
    <name type="scientific">Ascaris suum</name>
    <name type="common">Pig roundworm</name>
    <name type="synonym">Ascaris lumbricoides</name>
    <dbReference type="NCBI Taxonomy" id="6253"/>
    <lineage>
        <taxon>Eukaryota</taxon>
        <taxon>Metazoa</taxon>
        <taxon>Ecdysozoa</taxon>
        <taxon>Nematoda</taxon>
        <taxon>Chromadorea</taxon>
        <taxon>Rhabditida</taxon>
        <taxon>Spirurina</taxon>
        <taxon>Ascaridomorpha</taxon>
        <taxon>Ascaridoidea</taxon>
        <taxon>Ascarididae</taxon>
        <taxon>Ascaris</taxon>
    </lineage>
</organism>
<protein>
    <recommendedName>
        <fullName>Carboxypeptidase A inhibitor</fullName>
    </recommendedName>
</protein>
<reference key="1">
    <citation type="journal article" date="1989" name="Arch. Biochem. Biophys.">
        <title>Carboxypeptidase inhibitors from Ascaris suum: the primary structure.</title>
        <authorList>
            <person name="Homandberg G.A."/>
            <person name="Litwiller R.D."/>
            <person name="Peanasky R.J."/>
        </authorList>
    </citation>
    <scope>PROTEIN SEQUENCE</scope>
</reference>
<comment type="function">
    <text>Inhibits carboxypeptidase A.</text>
</comment>
<comment type="interaction">
    <interactant intactId="EBI-15754788">
        <id>P19399</id>
    </interactant>
    <interactant intactId="EBI-1642148">
        <id>P15085</id>
        <label>CPA1</label>
    </interactant>
    <organismsDiffer>true</organismsDiffer>
    <experiments>2</experiments>
</comment>
<comment type="subcellular location">
    <subcellularLocation>
        <location>Secreted</location>
    </subcellularLocation>
</comment>
<comment type="similarity">
    <text evidence="1">Belongs to the protease inhibitor I44 family.</text>
</comment>
<sequence>DQVRKCLSDTDCTNGEKCVQKNKICSTIVEIQRCEKEHFTIPCKSNNDCQVWAHEKICNKLPWGL</sequence>
<dbReference type="PIR" id="S03858">
    <property type="entry name" value="S03858"/>
</dbReference>
<dbReference type="PDB" id="3FJU">
    <property type="method" value="X-ray"/>
    <property type="resolution" value="1.60 A"/>
    <property type="chains" value="B=3-64"/>
</dbReference>
<dbReference type="PDBsum" id="3FJU"/>
<dbReference type="SMR" id="P19399"/>
<dbReference type="DIP" id="DIP-48698N"/>
<dbReference type="IntAct" id="P19399">
    <property type="interactions" value="1"/>
</dbReference>
<dbReference type="MEROPS" id="I44.001"/>
<dbReference type="GO" id="GO:0005576">
    <property type="term" value="C:extracellular region"/>
    <property type="evidence" value="ECO:0007669"/>
    <property type="project" value="UniProtKB-SubCell"/>
</dbReference>
<dbReference type="GO" id="GO:0008191">
    <property type="term" value="F:metalloendopeptidase inhibitor activity"/>
    <property type="evidence" value="ECO:0007669"/>
    <property type="project" value="InterPro"/>
</dbReference>
<dbReference type="Gene3D" id="3.30.40.170">
    <property type="match status" value="1"/>
</dbReference>
<dbReference type="InterPro" id="IPR032767">
    <property type="entry name" value="ACI44"/>
</dbReference>
<dbReference type="InterPro" id="IPR053758">
    <property type="entry name" value="CPA_Inhibitor_I44"/>
</dbReference>
<dbReference type="Pfam" id="PF15270">
    <property type="entry name" value="ACI44"/>
    <property type="match status" value="1"/>
</dbReference>
<feature type="chain" id="PRO_0000084133" description="Carboxypeptidase A inhibitor">
    <location>
        <begin position="1"/>
        <end position="65"/>
    </location>
</feature>
<feature type="helix" evidence="2">
    <location>
        <begin position="9"/>
        <end position="11"/>
    </location>
</feature>
<feature type="strand" evidence="2">
    <location>
        <begin position="17"/>
        <end position="19"/>
    </location>
</feature>
<feature type="turn" evidence="2">
    <location>
        <begin position="20"/>
        <end position="23"/>
    </location>
</feature>
<feature type="strand" evidence="2">
    <location>
        <begin position="24"/>
        <end position="26"/>
    </location>
</feature>
<feature type="helix" evidence="2">
    <location>
        <begin position="28"/>
        <end position="38"/>
    </location>
</feature>
<feature type="helix" evidence="2">
    <location>
        <begin position="46"/>
        <end position="49"/>
    </location>
</feature>
<feature type="strand" evidence="2">
    <location>
        <begin position="52"/>
        <end position="54"/>
    </location>
</feature>
<feature type="strand" evidence="2">
    <location>
        <begin position="57"/>
        <end position="59"/>
    </location>
</feature>
<feature type="strand" evidence="2">
    <location>
        <begin position="61"/>
        <end position="63"/>
    </location>
</feature>
<name>ICAA_ASCSU</name>
<evidence type="ECO:0000305" key="1"/>
<evidence type="ECO:0007829" key="2">
    <source>
        <dbReference type="PDB" id="3FJU"/>
    </source>
</evidence>
<proteinExistence type="evidence at protein level"/>